<organism>
    <name type="scientific">Prochlorococcus marinus (strain MIT 9303)</name>
    <dbReference type="NCBI Taxonomy" id="59922"/>
    <lineage>
        <taxon>Bacteria</taxon>
        <taxon>Bacillati</taxon>
        <taxon>Cyanobacteriota</taxon>
        <taxon>Cyanophyceae</taxon>
        <taxon>Synechococcales</taxon>
        <taxon>Prochlorococcaceae</taxon>
        <taxon>Prochlorococcus</taxon>
    </lineage>
</organism>
<protein>
    <recommendedName>
        <fullName evidence="1">Ribulose bisphosphate carboxylase large chain</fullName>
        <shortName evidence="1">RuBisCO large subunit</shortName>
        <ecNumber evidence="1">4.1.1.39</ecNumber>
    </recommendedName>
</protein>
<dbReference type="EC" id="4.1.1.39" evidence="1"/>
<dbReference type="EMBL" id="CP000554">
    <property type="protein sequence ID" value="ABM77559.1"/>
    <property type="molecule type" value="Genomic_DNA"/>
</dbReference>
<dbReference type="RefSeq" id="WP_011825472.1">
    <property type="nucleotide sequence ID" value="NC_008820.1"/>
</dbReference>
<dbReference type="SMR" id="A2C7U9"/>
<dbReference type="STRING" id="59922.P9303_08081"/>
<dbReference type="KEGG" id="pmf:P9303_08081"/>
<dbReference type="HOGENOM" id="CLU_031450_2_0_3"/>
<dbReference type="BioCyc" id="PMAR59922:G1G80-730-MONOMER"/>
<dbReference type="Proteomes" id="UP000002274">
    <property type="component" value="Chromosome"/>
</dbReference>
<dbReference type="GO" id="GO:0031470">
    <property type="term" value="C:carboxysome"/>
    <property type="evidence" value="ECO:0007669"/>
    <property type="project" value="UniProtKB-SubCell"/>
</dbReference>
<dbReference type="GO" id="GO:0000287">
    <property type="term" value="F:magnesium ion binding"/>
    <property type="evidence" value="ECO:0007669"/>
    <property type="project" value="UniProtKB-UniRule"/>
</dbReference>
<dbReference type="GO" id="GO:0004497">
    <property type="term" value="F:monooxygenase activity"/>
    <property type="evidence" value="ECO:0007669"/>
    <property type="project" value="UniProtKB-KW"/>
</dbReference>
<dbReference type="GO" id="GO:0016984">
    <property type="term" value="F:ribulose-bisphosphate carboxylase activity"/>
    <property type="evidence" value="ECO:0007669"/>
    <property type="project" value="UniProtKB-UniRule"/>
</dbReference>
<dbReference type="GO" id="GO:0009853">
    <property type="term" value="P:photorespiration"/>
    <property type="evidence" value="ECO:0007669"/>
    <property type="project" value="UniProtKB-KW"/>
</dbReference>
<dbReference type="GO" id="GO:0019253">
    <property type="term" value="P:reductive pentose-phosphate cycle"/>
    <property type="evidence" value="ECO:0007669"/>
    <property type="project" value="UniProtKB-UniRule"/>
</dbReference>
<dbReference type="Gene3D" id="3.20.20.110">
    <property type="entry name" value="Ribulose bisphosphate carboxylase, large subunit, C-terminal domain"/>
    <property type="match status" value="1"/>
</dbReference>
<dbReference type="Gene3D" id="3.30.70.150">
    <property type="entry name" value="RuBisCO large subunit, N-terminal domain"/>
    <property type="match status" value="1"/>
</dbReference>
<dbReference type="HAMAP" id="MF_01338">
    <property type="entry name" value="RuBisCO_L_type1"/>
    <property type="match status" value="1"/>
</dbReference>
<dbReference type="InterPro" id="IPR033966">
    <property type="entry name" value="RuBisCO"/>
</dbReference>
<dbReference type="InterPro" id="IPR000685">
    <property type="entry name" value="RuBisCO_lsu_C"/>
</dbReference>
<dbReference type="InterPro" id="IPR036376">
    <property type="entry name" value="RuBisCO_lsu_C_sf"/>
</dbReference>
<dbReference type="InterPro" id="IPR017443">
    <property type="entry name" value="RuBisCO_lsu_fd_N"/>
</dbReference>
<dbReference type="InterPro" id="IPR036422">
    <property type="entry name" value="RuBisCO_lsu_N_sf"/>
</dbReference>
<dbReference type="InterPro" id="IPR020888">
    <property type="entry name" value="RuBisCO_lsuI"/>
</dbReference>
<dbReference type="NCBIfam" id="NF003252">
    <property type="entry name" value="PRK04208.1"/>
    <property type="match status" value="1"/>
</dbReference>
<dbReference type="PANTHER" id="PTHR42704">
    <property type="entry name" value="RIBULOSE BISPHOSPHATE CARBOXYLASE"/>
    <property type="match status" value="1"/>
</dbReference>
<dbReference type="PANTHER" id="PTHR42704:SF17">
    <property type="entry name" value="RIBULOSE BISPHOSPHATE CARBOXYLASE LARGE CHAIN"/>
    <property type="match status" value="1"/>
</dbReference>
<dbReference type="Pfam" id="PF00016">
    <property type="entry name" value="RuBisCO_large"/>
    <property type="match status" value="1"/>
</dbReference>
<dbReference type="Pfam" id="PF02788">
    <property type="entry name" value="RuBisCO_large_N"/>
    <property type="match status" value="1"/>
</dbReference>
<dbReference type="SFLD" id="SFLDG01052">
    <property type="entry name" value="RuBisCO"/>
    <property type="match status" value="1"/>
</dbReference>
<dbReference type="SFLD" id="SFLDS00014">
    <property type="entry name" value="RuBisCO"/>
    <property type="match status" value="1"/>
</dbReference>
<dbReference type="SFLD" id="SFLDG00301">
    <property type="entry name" value="RuBisCO-like_proteins"/>
    <property type="match status" value="1"/>
</dbReference>
<dbReference type="SUPFAM" id="SSF51649">
    <property type="entry name" value="RuBisCo, C-terminal domain"/>
    <property type="match status" value="1"/>
</dbReference>
<dbReference type="SUPFAM" id="SSF54966">
    <property type="entry name" value="RuBisCO, large subunit, small (N-terminal) domain"/>
    <property type="match status" value="1"/>
</dbReference>
<evidence type="ECO:0000255" key="1">
    <source>
        <dbReference type="HAMAP-Rule" id="MF_01338"/>
    </source>
</evidence>
<comment type="function">
    <text evidence="1">RuBisCO catalyzes two reactions: the carboxylation of D-ribulose 1,5-bisphosphate, the primary event in carbon dioxide fixation, as well as the oxidative fragmentation of the pentose substrate in the photorespiration process. Both reactions occur simultaneously and in competition at the same active site.</text>
</comment>
<comment type="catalytic activity">
    <reaction evidence="1">
        <text>2 (2R)-3-phosphoglycerate + 2 H(+) = D-ribulose 1,5-bisphosphate + CO2 + H2O</text>
        <dbReference type="Rhea" id="RHEA:23124"/>
        <dbReference type="ChEBI" id="CHEBI:15377"/>
        <dbReference type="ChEBI" id="CHEBI:15378"/>
        <dbReference type="ChEBI" id="CHEBI:16526"/>
        <dbReference type="ChEBI" id="CHEBI:57870"/>
        <dbReference type="ChEBI" id="CHEBI:58272"/>
        <dbReference type="EC" id="4.1.1.39"/>
    </reaction>
</comment>
<comment type="catalytic activity">
    <reaction evidence="1">
        <text>D-ribulose 1,5-bisphosphate + O2 = 2-phosphoglycolate + (2R)-3-phosphoglycerate + 2 H(+)</text>
        <dbReference type="Rhea" id="RHEA:36631"/>
        <dbReference type="ChEBI" id="CHEBI:15378"/>
        <dbReference type="ChEBI" id="CHEBI:15379"/>
        <dbReference type="ChEBI" id="CHEBI:57870"/>
        <dbReference type="ChEBI" id="CHEBI:58033"/>
        <dbReference type="ChEBI" id="CHEBI:58272"/>
    </reaction>
</comment>
<comment type="cofactor">
    <cofactor evidence="1">
        <name>Mg(2+)</name>
        <dbReference type="ChEBI" id="CHEBI:18420"/>
    </cofactor>
    <text evidence="1">Binds 1 Mg(2+) ion per subunit.</text>
</comment>
<comment type="subunit">
    <text evidence="1">Heterohexadecamer of 8 large chains and 8 small chains.</text>
</comment>
<comment type="subcellular location">
    <subcellularLocation>
        <location evidence="1">Carboxysome</location>
    </subcellularLocation>
</comment>
<comment type="miscellaneous">
    <text evidence="1">The basic functional RuBisCO is composed of a large chain homodimer in a 'head-to-tail' conformation. In form I RuBisCO this homodimer is arranged in a barrel-like tetramer with the small subunits forming a tetrameric 'cap' on each end of the 'barrel'.</text>
</comment>
<comment type="similarity">
    <text evidence="1">Belongs to the RuBisCO large chain family. Type I subfamily.</text>
</comment>
<gene>
    <name evidence="1" type="primary">cbbL</name>
    <name evidence="1" type="synonym">rbcL</name>
    <name type="ordered locus">P9303_08081</name>
</gene>
<keyword id="KW-1283">Bacterial microcompartment</keyword>
<keyword id="KW-0113">Calvin cycle</keyword>
<keyword id="KW-0120">Carbon dioxide fixation</keyword>
<keyword id="KW-1282">Carboxysome</keyword>
<keyword id="KW-0456">Lyase</keyword>
<keyword id="KW-0460">Magnesium</keyword>
<keyword id="KW-0479">Metal-binding</keyword>
<keyword id="KW-0503">Monooxygenase</keyword>
<keyword id="KW-0560">Oxidoreductase</keyword>
<keyword id="KW-0601">Photorespiration</keyword>
<keyword id="KW-0602">Photosynthesis</keyword>
<feature type="chain" id="PRO_0000299970" description="Ribulose bisphosphate carboxylase large chain">
    <location>
        <begin position="1"/>
        <end position="470"/>
    </location>
</feature>
<feature type="active site" description="Proton acceptor" evidence="1">
    <location>
        <position position="167"/>
    </location>
</feature>
<feature type="active site" description="Proton acceptor" evidence="1">
    <location>
        <position position="286"/>
    </location>
</feature>
<feature type="binding site" description="in homodimeric partner" evidence="1">
    <location>
        <position position="115"/>
    </location>
    <ligand>
        <name>substrate</name>
    </ligand>
</feature>
<feature type="binding site" evidence="1">
    <location>
        <position position="165"/>
    </location>
    <ligand>
        <name>substrate</name>
    </ligand>
</feature>
<feature type="binding site" evidence="1">
    <location>
        <position position="169"/>
    </location>
    <ligand>
        <name>substrate</name>
    </ligand>
</feature>
<feature type="binding site" description="via carbamate group" evidence="1">
    <location>
        <position position="193"/>
    </location>
    <ligand>
        <name>Mg(2+)</name>
        <dbReference type="ChEBI" id="CHEBI:18420"/>
    </ligand>
</feature>
<feature type="binding site" evidence="1">
    <location>
        <position position="195"/>
    </location>
    <ligand>
        <name>Mg(2+)</name>
        <dbReference type="ChEBI" id="CHEBI:18420"/>
    </ligand>
</feature>
<feature type="binding site" evidence="1">
    <location>
        <position position="196"/>
    </location>
    <ligand>
        <name>Mg(2+)</name>
        <dbReference type="ChEBI" id="CHEBI:18420"/>
    </ligand>
</feature>
<feature type="binding site" evidence="1">
    <location>
        <position position="287"/>
    </location>
    <ligand>
        <name>substrate</name>
    </ligand>
</feature>
<feature type="binding site" evidence="1">
    <location>
        <position position="319"/>
    </location>
    <ligand>
        <name>substrate</name>
    </ligand>
</feature>
<feature type="binding site" evidence="1">
    <location>
        <position position="371"/>
    </location>
    <ligand>
        <name>substrate</name>
    </ligand>
</feature>
<feature type="site" description="Transition state stabilizer" evidence="1">
    <location>
        <position position="326"/>
    </location>
</feature>
<feature type="modified residue" description="N6-carboxylysine" evidence="1">
    <location>
        <position position="193"/>
    </location>
</feature>
<accession>A2C7U9</accession>
<sequence length="470" mass="52580">MSKKYDAGVKEYRDTYWTPDYVPLDTDLLACFKVTGQEGVPREEVAAAVAAESSTGTWSTVWSELLTDLEFYKGRCYRIEDVPGDKESFYAFIAYPLDLFEEGSITNVLTSLVGNVFGFKALRHLRLEDIRFPMAFIKTCGGPPNGIVVERDRLNKYGRPLLGCTIKPKLGLSGKNYGRVVYECLRGGLDLTKDDENINSQPFQRWRERFEFVAEAVKLAQQETGEVKGHYLNCTATTPEEMYERAEFAKELDMPIIMHDYITGGFTANTGLANWCRKNGMLLHIHRAMHAVIDRHPKHGIHFRVLAKCLRLSGGDQLHTGTVVGKLEGDRQTTLGFIDNLRESFVPEDRNRGNFFDQDWGSMPGVFAVASGGIHVWHMPALLAIFGDDSCLQFGGGTHGHPWGSAAGAAANRVALEACVKARNAGREIEKESRDILMEAAKHSPELAIALETWKEIKFEFDTVDKLDVQ</sequence>
<reference key="1">
    <citation type="journal article" date="2007" name="PLoS Genet.">
        <title>Patterns and implications of gene gain and loss in the evolution of Prochlorococcus.</title>
        <authorList>
            <person name="Kettler G.C."/>
            <person name="Martiny A.C."/>
            <person name="Huang K."/>
            <person name="Zucker J."/>
            <person name="Coleman M.L."/>
            <person name="Rodrigue S."/>
            <person name="Chen F."/>
            <person name="Lapidus A."/>
            <person name="Ferriera S."/>
            <person name="Johnson J."/>
            <person name="Steglich C."/>
            <person name="Church G.M."/>
            <person name="Richardson P."/>
            <person name="Chisholm S.W."/>
        </authorList>
    </citation>
    <scope>NUCLEOTIDE SEQUENCE [LARGE SCALE GENOMIC DNA]</scope>
    <source>
        <strain>MIT 9303</strain>
    </source>
</reference>
<name>RBL_PROM3</name>
<proteinExistence type="inferred from homology"/>